<organism>
    <name type="scientific">Streptococcus equi subsp. zooepidemicus (strain MGCS10565)</name>
    <dbReference type="NCBI Taxonomy" id="552526"/>
    <lineage>
        <taxon>Bacteria</taxon>
        <taxon>Bacillati</taxon>
        <taxon>Bacillota</taxon>
        <taxon>Bacilli</taxon>
        <taxon>Lactobacillales</taxon>
        <taxon>Streptococcaceae</taxon>
        <taxon>Streptococcus</taxon>
    </lineage>
</organism>
<protein>
    <recommendedName>
        <fullName evidence="1">Aspartyl/glutamyl-tRNA(Asn/Gln) amidotransferase subunit B</fullName>
        <shortName evidence="1">Asp/Glu-ADT subunit B</shortName>
        <ecNumber evidence="1">6.3.5.-</ecNumber>
    </recommendedName>
</protein>
<dbReference type="EC" id="6.3.5.-" evidence="1"/>
<dbReference type="EMBL" id="CP001129">
    <property type="protein sequence ID" value="ACG61765.1"/>
    <property type="molecule type" value="Genomic_DNA"/>
</dbReference>
<dbReference type="RefSeq" id="WP_012515041.1">
    <property type="nucleotide sequence ID" value="NC_011134.1"/>
</dbReference>
<dbReference type="SMR" id="B4U198"/>
<dbReference type="KEGG" id="sez:Sez_0391"/>
<dbReference type="HOGENOM" id="CLU_019240_0_0_9"/>
<dbReference type="Proteomes" id="UP000001873">
    <property type="component" value="Chromosome"/>
</dbReference>
<dbReference type="GO" id="GO:0050566">
    <property type="term" value="F:asparaginyl-tRNA synthase (glutamine-hydrolyzing) activity"/>
    <property type="evidence" value="ECO:0007669"/>
    <property type="project" value="RHEA"/>
</dbReference>
<dbReference type="GO" id="GO:0005524">
    <property type="term" value="F:ATP binding"/>
    <property type="evidence" value="ECO:0007669"/>
    <property type="project" value="UniProtKB-KW"/>
</dbReference>
<dbReference type="GO" id="GO:0050567">
    <property type="term" value="F:glutaminyl-tRNA synthase (glutamine-hydrolyzing) activity"/>
    <property type="evidence" value="ECO:0007669"/>
    <property type="project" value="UniProtKB-UniRule"/>
</dbReference>
<dbReference type="GO" id="GO:0070681">
    <property type="term" value="P:glutaminyl-tRNAGln biosynthesis via transamidation"/>
    <property type="evidence" value="ECO:0007669"/>
    <property type="project" value="TreeGrafter"/>
</dbReference>
<dbReference type="GO" id="GO:0006412">
    <property type="term" value="P:translation"/>
    <property type="evidence" value="ECO:0007669"/>
    <property type="project" value="UniProtKB-UniRule"/>
</dbReference>
<dbReference type="FunFam" id="1.10.10.410:FF:000001">
    <property type="entry name" value="Aspartyl/glutamyl-tRNA(Asn/Gln) amidotransferase subunit B"/>
    <property type="match status" value="1"/>
</dbReference>
<dbReference type="FunFam" id="1.10.150.380:FF:000001">
    <property type="entry name" value="Aspartyl/glutamyl-tRNA(Asn/Gln) amidotransferase subunit B"/>
    <property type="match status" value="1"/>
</dbReference>
<dbReference type="Gene3D" id="1.10.10.410">
    <property type="match status" value="1"/>
</dbReference>
<dbReference type="Gene3D" id="1.10.150.380">
    <property type="entry name" value="GatB domain, N-terminal subdomain"/>
    <property type="match status" value="1"/>
</dbReference>
<dbReference type="HAMAP" id="MF_00121">
    <property type="entry name" value="GatB"/>
    <property type="match status" value="1"/>
</dbReference>
<dbReference type="InterPro" id="IPR017959">
    <property type="entry name" value="Asn/Gln-tRNA_amidoTrfase_suB/E"/>
</dbReference>
<dbReference type="InterPro" id="IPR006075">
    <property type="entry name" value="Asn/Gln-tRNA_Trfase_suB/E_cat"/>
</dbReference>
<dbReference type="InterPro" id="IPR018027">
    <property type="entry name" value="Asn/Gln_amidotransferase"/>
</dbReference>
<dbReference type="InterPro" id="IPR003789">
    <property type="entry name" value="Asn/Gln_tRNA_amidoTrase-B-like"/>
</dbReference>
<dbReference type="InterPro" id="IPR004413">
    <property type="entry name" value="GatB"/>
</dbReference>
<dbReference type="InterPro" id="IPR042114">
    <property type="entry name" value="GatB_C_1"/>
</dbReference>
<dbReference type="InterPro" id="IPR023168">
    <property type="entry name" value="GatB_Yqey_C_2"/>
</dbReference>
<dbReference type="InterPro" id="IPR017958">
    <property type="entry name" value="Gln-tRNA_amidoTrfase_suB_CS"/>
</dbReference>
<dbReference type="InterPro" id="IPR014746">
    <property type="entry name" value="Gln_synth/guanido_kin_cat_dom"/>
</dbReference>
<dbReference type="NCBIfam" id="TIGR00133">
    <property type="entry name" value="gatB"/>
    <property type="match status" value="1"/>
</dbReference>
<dbReference type="NCBIfam" id="NF004011">
    <property type="entry name" value="PRK05477.1-1"/>
    <property type="match status" value="1"/>
</dbReference>
<dbReference type="NCBIfam" id="NF004012">
    <property type="entry name" value="PRK05477.1-2"/>
    <property type="match status" value="1"/>
</dbReference>
<dbReference type="NCBIfam" id="NF004014">
    <property type="entry name" value="PRK05477.1-4"/>
    <property type="match status" value="1"/>
</dbReference>
<dbReference type="PANTHER" id="PTHR11659">
    <property type="entry name" value="GLUTAMYL-TRNA GLN AMIDOTRANSFERASE SUBUNIT B MITOCHONDRIAL AND PROKARYOTIC PET112-RELATED"/>
    <property type="match status" value="1"/>
</dbReference>
<dbReference type="PANTHER" id="PTHR11659:SF0">
    <property type="entry name" value="GLUTAMYL-TRNA(GLN) AMIDOTRANSFERASE SUBUNIT B, MITOCHONDRIAL"/>
    <property type="match status" value="1"/>
</dbReference>
<dbReference type="Pfam" id="PF02934">
    <property type="entry name" value="GatB_N"/>
    <property type="match status" value="1"/>
</dbReference>
<dbReference type="Pfam" id="PF02637">
    <property type="entry name" value="GatB_Yqey"/>
    <property type="match status" value="1"/>
</dbReference>
<dbReference type="SMART" id="SM00845">
    <property type="entry name" value="GatB_Yqey"/>
    <property type="match status" value="1"/>
</dbReference>
<dbReference type="SUPFAM" id="SSF89095">
    <property type="entry name" value="GatB/YqeY motif"/>
    <property type="match status" value="1"/>
</dbReference>
<dbReference type="SUPFAM" id="SSF55931">
    <property type="entry name" value="Glutamine synthetase/guanido kinase"/>
    <property type="match status" value="1"/>
</dbReference>
<dbReference type="PROSITE" id="PS01234">
    <property type="entry name" value="GATB"/>
    <property type="match status" value="1"/>
</dbReference>
<proteinExistence type="inferred from homology"/>
<comment type="function">
    <text evidence="1">Allows the formation of correctly charged Asn-tRNA(Asn) or Gln-tRNA(Gln) through the transamidation of misacylated Asp-tRNA(Asn) or Glu-tRNA(Gln) in organisms which lack either or both of asparaginyl-tRNA or glutaminyl-tRNA synthetases. The reaction takes place in the presence of glutamine and ATP through an activated phospho-Asp-tRNA(Asn) or phospho-Glu-tRNA(Gln).</text>
</comment>
<comment type="catalytic activity">
    <reaction evidence="1">
        <text>L-glutamyl-tRNA(Gln) + L-glutamine + ATP + H2O = L-glutaminyl-tRNA(Gln) + L-glutamate + ADP + phosphate + H(+)</text>
        <dbReference type="Rhea" id="RHEA:17521"/>
        <dbReference type="Rhea" id="RHEA-COMP:9681"/>
        <dbReference type="Rhea" id="RHEA-COMP:9684"/>
        <dbReference type="ChEBI" id="CHEBI:15377"/>
        <dbReference type="ChEBI" id="CHEBI:15378"/>
        <dbReference type="ChEBI" id="CHEBI:29985"/>
        <dbReference type="ChEBI" id="CHEBI:30616"/>
        <dbReference type="ChEBI" id="CHEBI:43474"/>
        <dbReference type="ChEBI" id="CHEBI:58359"/>
        <dbReference type="ChEBI" id="CHEBI:78520"/>
        <dbReference type="ChEBI" id="CHEBI:78521"/>
        <dbReference type="ChEBI" id="CHEBI:456216"/>
    </reaction>
</comment>
<comment type="catalytic activity">
    <reaction evidence="1">
        <text>L-aspartyl-tRNA(Asn) + L-glutamine + ATP + H2O = L-asparaginyl-tRNA(Asn) + L-glutamate + ADP + phosphate + 2 H(+)</text>
        <dbReference type="Rhea" id="RHEA:14513"/>
        <dbReference type="Rhea" id="RHEA-COMP:9674"/>
        <dbReference type="Rhea" id="RHEA-COMP:9677"/>
        <dbReference type="ChEBI" id="CHEBI:15377"/>
        <dbReference type="ChEBI" id="CHEBI:15378"/>
        <dbReference type="ChEBI" id="CHEBI:29985"/>
        <dbReference type="ChEBI" id="CHEBI:30616"/>
        <dbReference type="ChEBI" id="CHEBI:43474"/>
        <dbReference type="ChEBI" id="CHEBI:58359"/>
        <dbReference type="ChEBI" id="CHEBI:78515"/>
        <dbReference type="ChEBI" id="CHEBI:78516"/>
        <dbReference type="ChEBI" id="CHEBI:456216"/>
    </reaction>
</comment>
<comment type="subunit">
    <text evidence="1">Heterotrimer of A, B and C subunits.</text>
</comment>
<comment type="similarity">
    <text evidence="1">Belongs to the GatB/GatE family. GatB subfamily.</text>
</comment>
<keyword id="KW-0067">ATP-binding</keyword>
<keyword id="KW-0436">Ligase</keyword>
<keyword id="KW-0547">Nucleotide-binding</keyword>
<keyword id="KW-0648">Protein biosynthesis</keyword>
<accession>B4U198</accession>
<gene>
    <name evidence="1" type="primary">gatB</name>
    <name type="ordered locus">Sez_0391</name>
</gene>
<name>GATB_STREM</name>
<feature type="chain" id="PRO_1000095243" description="Aspartyl/glutamyl-tRNA(Asn/Gln) amidotransferase subunit B">
    <location>
        <begin position="1"/>
        <end position="479"/>
    </location>
</feature>
<evidence type="ECO:0000255" key="1">
    <source>
        <dbReference type="HAMAP-Rule" id="MF_00121"/>
    </source>
</evidence>
<reference key="1">
    <citation type="journal article" date="2008" name="PLoS ONE">
        <title>Genome sequence of a lancefield group C Streptococcus zooepidemicus strain causing epidemic nephritis: new information about an old disease.</title>
        <authorList>
            <person name="Beres S.B."/>
            <person name="Sesso R."/>
            <person name="Pinto S.W.L."/>
            <person name="Hoe N.P."/>
            <person name="Porcella S.F."/>
            <person name="Deleo F.R."/>
            <person name="Musser J.M."/>
        </authorList>
    </citation>
    <scope>NUCLEOTIDE SEQUENCE [LARGE SCALE GENOMIC DNA]</scope>
    <source>
        <strain>MGCS10565</strain>
    </source>
</reference>
<sequence length="479" mass="53128">MNFETIIGLEVHVELNTNSKIFSPSSAHFGEDPNASTNVIDWSFPGVLPVMNKGVIDAGIKAALALNMSIHQHMHFDRKNYFYPDNPKAYQISQFDEPIGYNGWIDITLEDGSTKKIRIERAHLEEDAGKNTHGTDGYSYVDLNRQGVPLIEIVSEADMRSPEEAYAYLTALKEIIQYTGISDVKMEEGSMRVDANISLRPYGQEAFGTKTELKNLNSFSNVRKGLEFEVERQAKILRSGGVIRQETRRYDEASKGTILMRVKEGAADYRYFPEPDLPLFEIDDAWIEDMRAELPRFPAERRVSYIKDLGLSAYDAGQLTATKALSDFFEQAVALGGDAKQVSNWLQGEVAQFLNAEGKTIDQLALTPDSLVEMIAIIADGTISSKIAKKVFVHLAKHGGSARAYVEKAGLVQISDPAVLIPIIHQVFADNEAAVADFKSGKRNADKAFTGFLMKATKGQANPQIAQQLLAQELQKLLD</sequence>